<gene>
    <name evidence="1" type="primary">rnp2</name>
    <name type="ordered locus">MmarC7_0126</name>
</gene>
<comment type="function">
    <text evidence="1">Part of ribonuclease P, a protein complex that generates mature tRNA molecules by cleaving their 5'-ends.</text>
</comment>
<comment type="catalytic activity">
    <reaction evidence="1">
        <text>Endonucleolytic cleavage of RNA, removing 5'-extranucleotides from tRNA precursor.</text>
        <dbReference type="EC" id="3.1.26.5"/>
    </reaction>
</comment>
<comment type="subunit">
    <text evidence="1">Consists of a catalytic RNA component and at least 4-5 protein subunits.</text>
</comment>
<comment type="subcellular location">
    <subcellularLocation>
        <location evidence="1">Cytoplasm</location>
    </subcellularLocation>
</comment>
<comment type="similarity">
    <text evidence="1">Belongs to the eukaryotic/archaeal RNase P protein component 2 family.</text>
</comment>
<organism>
    <name type="scientific">Methanococcus maripaludis (strain C7 / ATCC BAA-1331)</name>
    <dbReference type="NCBI Taxonomy" id="426368"/>
    <lineage>
        <taxon>Archaea</taxon>
        <taxon>Methanobacteriati</taxon>
        <taxon>Methanobacteriota</taxon>
        <taxon>Methanomada group</taxon>
        <taxon>Methanococci</taxon>
        <taxon>Methanococcales</taxon>
        <taxon>Methanococcaceae</taxon>
        <taxon>Methanococcus</taxon>
    </lineage>
</organism>
<dbReference type="EC" id="3.1.26.5" evidence="1"/>
<dbReference type="EMBL" id="CP000745">
    <property type="protein sequence ID" value="ABR65196.1"/>
    <property type="molecule type" value="Genomic_DNA"/>
</dbReference>
<dbReference type="SMR" id="A6VFH0"/>
<dbReference type="STRING" id="426368.MmarC7_0126"/>
<dbReference type="KEGG" id="mmz:MmarC7_0126"/>
<dbReference type="eggNOG" id="arCOG01365">
    <property type="taxonomic scope" value="Archaea"/>
</dbReference>
<dbReference type="HOGENOM" id="CLU_137733_1_0_2"/>
<dbReference type="OrthoDB" id="19261at2157"/>
<dbReference type="GO" id="GO:0005737">
    <property type="term" value="C:cytoplasm"/>
    <property type="evidence" value="ECO:0007669"/>
    <property type="project" value="UniProtKB-SubCell"/>
</dbReference>
<dbReference type="GO" id="GO:0030677">
    <property type="term" value="C:ribonuclease P complex"/>
    <property type="evidence" value="ECO:0007669"/>
    <property type="project" value="UniProtKB-UniRule"/>
</dbReference>
<dbReference type="GO" id="GO:0004526">
    <property type="term" value="F:ribonuclease P activity"/>
    <property type="evidence" value="ECO:0007669"/>
    <property type="project" value="UniProtKB-UniRule"/>
</dbReference>
<dbReference type="GO" id="GO:0001682">
    <property type="term" value="P:tRNA 5'-leader removal"/>
    <property type="evidence" value="ECO:0007669"/>
    <property type="project" value="UniProtKB-UniRule"/>
</dbReference>
<dbReference type="Gene3D" id="3.30.70.3250">
    <property type="entry name" value="Ribonuclease P, Pop5 subunit"/>
    <property type="match status" value="1"/>
</dbReference>
<dbReference type="HAMAP" id="MF_00755">
    <property type="entry name" value="RNase_P_2"/>
    <property type="match status" value="1"/>
</dbReference>
<dbReference type="InterPro" id="IPR002759">
    <property type="entry name" value="Pop5/Rpp14/Rnp2-like"/>
</dbReference>
<dbReference type="InterPro" id="IPR038085">
    <property type="entry name" value="Rnp2-like_sf"/>
</dbReference>
<dbReference type="InterPro" id="IPR016434">
    <property type="entry name" value="Rnp2_archaea"/>
</dbReference>
<dbReference type="PANTHER" id="PTHR15441">
    <property type="entry name" value="RIBONUCLEASE P PROTEIN SUBUNIT P14"/>
    <property type="match status" value="1"/>
</dbReference>
<dbReference type="PANTHER" id="PTHR15441:SF2">
    <property type="entry name" value="RIBONUCLEASE P_MRP PROTEIN SUBUNIT POP5"/>
    <property type="match status" value="1"/>
</dbReference>
<dbReference type="Pfam" id="PF01900">
    <property type="entry name" value="RNase_P_Rpp14"/>
    <property type="match status" value="1"/>
</dbReference>
<dbReference type="PIRSF" id="PIRSF004952">
    <property type="entry name" value="RNase_P_2"/>
    <property type="match status" value="1"/>
</dbReference>
<dbReference type="SUPFAM" id="SSF160350">
    <property type="entry name" value="Rnp2-like"/>
    <property type="match status" value="1"/>
</dbReference>
<name>RNP2_METM7</name>
<accession>A6VFH0</accession>
<evidence type="ECO:0000255" key="1">
    <source>
        <dbReference type="HAMAP-Rule" id="MF_00755"/>
    </source>
</evidence>
<reference key="1">
    <citation type="submission" date="2007-06" db="EMBL/GenBank/DDBJ databases">
        <title>Complete sequence of Methanococcus maripaludis C7.</title>
        <authorList>
            <consortium name="US DOE Joint Genome Institute"/>
            <person name="Copeland A."/>
            <person name="Lucas S."/>
            <person name="Lapidus A."/>
            <person name="Barry K."/>
            <person name="Glavina del Rio T."/>
            <person name="Dalin E."/>
            <person name="Tice H."/>
            <person name="Pitluck S."/>
            <person name="Clum A."/>
            <person name="Schmutz J."/>
            <person name="Larimer F."/>
            <person name="Land M."/>
            <person name="Hauser L."/>
            <person name="Kyrpides N."/>
            <person name="Anderson I."/>
            <person name="Sieprawska-Lupa M."/>
            <person name="Whitman W.B."/>
            <person name="Richardson P."/>
        </authorList>
    </citation>
    <scope>NUCLEOTIDE SEQUENCE [LARGE SCALE GENOMIC DNA]</scope>
    <source>
        <strain>C7 / ATCC BAA-1331</strain>
    </source>
</reference>
<protein>
    <recommendedName>
        <fullName evidence="1">Ribonuclease P protein component 2</fullName>
        <shortName evidence="1">RNase P component 2</shortName>
        <ecNumber evidence="1">3.1.26.5</ecNumber>
    </recommendedName>
    <alternativeName>
        <fullName evidence="1">Pop5</fullName>
    </alternativeName>
</protein>
<keyword id="KW-0963">Cytoplasm</keyword>
<keyword id="KW-0255">Endonuclease</keyword>
<keyword id="KW-0378">Hydrolase</keyword>
<keyword id="KW-0540">Nuclease</keyword>
<keyword id="KW-0819">tRNA processing</keyword>
<sequence>MLKTLPPTLREKKRYVALEIIFEDELFQKDVIAIVRNALMNYSGVLGCSKANPWLIDYNHPYGILRISRDEVDNLRSSLSLSNEHRKKPINIHIIGISNSVKHIREKFLHVPHEPYYKVIQKLKKKGPKR</sequence>
<feature type="chain" id="PRO_1000046623" description="Ribonuclease P protein component 2">
    <location>
        <begin position="1"/>
        <end position="130"/>
    </location>
</feature>
<proteinExistence type="inferred from homology"/>